<keyword id="KW-0054">Arabinose catabolism</keyword>
<keyword id="KW-0067">ATP-binding</keyword>
<keyword id="KW-0119">Carbohydrate metabolism</keyword>
<keyword id="KW-0418">Kinase</keyword>
<keyword id="KW-0547">Nucleotide-binding</keyword>
<keyword id="KW-0808">Transferase</keyword>
<reference key="1">
    <citation type="journal article" date="2005" name="Nucleic Acids Res.">
        <title>Genome dynamics and diversity of Shigella species, the etiologic agents of bacillary dysentery.</title>
        <authorList>
            <person name="Yang F."/>
            <person name="Yang J."/>
            <person name="Zhang X."/>
            <person name="Chen L."/>
            <person name="Jiang Y."/>
            <person name="Yan Y."/>
            <person name="Tang X."/>
            <person name="Wang J."/>
            <person name="Xiong Z."/>
            <person name="Dong J."/>
            <person name="Xue Y."/>
            <person name="Zhu Y."/>
            <person name="Xu X."/>
            <person name="Sun L."/>
            <person name="Chen S."/>
            <person name="Nie H."/>
            <person name="Peng J."/>
            <person name="Xu J."/>
            <person name="Wang Y."/>
            <person name="Yuan Z."/>
            <person name="Wen Y."/>
            <person name="Yao Z."/>
            <person name="Shen Y."/>
            <person name="Qiang B."/>
            <person name="Hou Y."/>
            <person name="Yu J."/>
            <person name="Jin Q."/>
        </authorList>
    </citation>
    <scope>NUCLEOTIDE SEQUENCE [LARGE SCALE GENOMIC DNA]</scope>
    <source>
        <strain>Sb227</strain>
    </source>
</reference>
<feature type="chain" id="PRO_0000263404" description="Ribulokinase">
    <location>
        <begin position="1"/>
        <end position="566"/>
    </location>
</feature>
<proteinExistence type="inferred from homology"/>
<accession>Q326H2</accession>
<name>ARAB_SHIBS</name>
<sequence>MAIAIGLDFGSDSVRALAVDCASGEEIATSVEWYPRWQKGQFCDAPNNQFRHHPRDYIESMEAALKTVLAELSVEQRAAVVGIGVDSTGSTPAPIDADGNVLALRPEFAENPNAMFVLWKDHTAVEEAEEITRLCHAPGNVDYSRYIGGIYSSEWFWAKILHVTRQDSAVAQSAASWIELCDWVPALLSGTTRPQDIRRGRCSAGHKSLWHESWGGLPPASFFDELDPILNRHLPSPLFTDTWTADIPVGTLCPEWAQRLGLPESVVISGGAFDCHMGAVGAGAQPNALVKVIGTSTCDILIADKQSVGERAVKGICGQVDGSVVPGFIGLEAGQSAFGDIYAWFGRVLGWPLEQLAAQHPELKAQINASQKQLLPALTEAWAKNPSLDHLPVVLNWFNGRRTPNANQRLKGVITDLNLATDAPLLFGGLIAATAFGARAIMECFTDQGIAVNNVMALGGIARKNQVIMQACCDVLNRPLQIVASDQCCALGAAIFAAVAAKVHADIPSAQQKMASAVEKTLQPRSEQTQRFEQLYRRYQQWAMSAEQHYLPTSAPAQAAQAVPTL</sequence>
<evidence type="ECO:0000255" key="1">
    <source>
        <dbReference type="HAMAP-Rule" id="MF_00520"/>
    </source>
</evidence>
<organism>
    <name type="scientific">Shigella boydii serotype 4 (strain Sb227)</name>
    <dbReference type="NCBI Taxonomy" id="300268"/>
    <lineage>
        <taxon>Bacteria</taxon>
        <taxon>Pseudomonadati</taxon>
        <taxon>Pseudomonadota</taxon>
        <taxon>Gammaproteobacteria</taxon>
        <taxon>Enterobacterales</taxon>
        <taxon>Enterobacteriaceae</taxon>
        <taxon>Shigella</taxon>
    </lineage>
</organism>
<comment type="catalytic activity">
    <reaction evidence="1">
        <text>D-ribulose + ATP = D-ribulose 5-phosphate + ADP + H(+)</text>
        <dbReference type="Rhea" id="RHEA:17601"/>
        <dbReference type="ChEBI" id="CHEBI:15378"/>
        <dbReference type="ChEBI" id="CHEBI:17173"/>
        <dbReference type="ChEBI" id="CHEBI:30616"/>
        <dbReference type="ChEBI" id="CHEBI:58121"/>
        <dbReference type="ChEBI" id="CHEBI:456216"/>
        <dbReference type="EC" id="2.7.1.16"/>
    </reaction>
</comment>
<comment type="catalytic activity">
    <reaction evidence="1">
        <text>L-ribulose + ATP = L-ribulose 5-phosphate + ADP + H(+)</text>
        <dbReference type="Rhea" id="RHEA:22072"/>
        <dbReference type="ChEBI" id="CHEBI:15378"/>
        <dbReference type="ChEBI" id="CHEBI:16880"/>
        <dbReference type="ChEBI" id="CHEBI:30616"/>
        <dbReference type="ChEBI" id="CHEBI:58226"/>
        <dbReference type="ChEBI" id="CHEBI:456216"/>
        <dbReference type="EC" id="2.7.1.16"/>
    </reaction>
</comment>
<comment type="pathway">
    <text evidence="1">Carbohydrate degradation; L-arabinose degradation via L-ribulose; D-xylulose 5-phosphate from L-arabinose (bacterial route): step 2/3.</text>
</comment>
<comment type="similarity">
    <text evidence="1">Belongs to the ribulokinase family.</text>
</comment>
<gene>
    <name evidence="1" type="primary">araB</name>
    <name type="ordered locus">SBO_0050</name>
</gene>
<protein>
    <recommendedName>
        <fullName evidence="1">Ribulokinase</fullName>
        <ecNumber evidence="1">2.7.1.16</ecNumber>
    </recommendedName>
</protein>
<dbReference type="EC" id="2.7.1.16" evidence="1"/>
<dbReference type="EMBL" id="CP000036">
    <property type="protein sequence ID" value="ABB64786.1"/>
    <property type="molecule type" value="Genomic_DNA"/>
</dbReference>
<dbReference type="RefSeq" id="WP_000951773.1">
    <property type="nucleotide sequence ID" value="NC_007613.1"/>
</dbReference>
<dbReference type="SMR" id="Q326H2"/>
<dbReference type="KEGG" id="sbo:SBO_0050"/>
<dbReference type="HOGENOM" id="CLU_009281_9_1_6"/>
<dbReference type="UniPathway" id="UPA00145">
    <property type="reaction ID" value="UER00566"/>
</dbReference>
<dbReference type="Proteomes" id="UP000007067">
    <property type="component" value="Chromosome"/>
</dbReference>
<dbReference type="GO" id="GO:0005737">
    <property type="term" value="C:cytoplasm"/>
    <property type="evidence" value="ECO:0007669"/>
    <property type="project" value="TreeGrafter"/>
</dbReference>
<dbReference type="GO" id="GO:0005524">
    <property type="term" value="F:ATP binding"/>
    <property type="evidence" value="ECO:0007669"/>
    <property type="project" value="UniProtKB-KW"/>
</dbReference>
<dbReference type="GO" id="GO:0019150">
    <property type="term" value="F:D-ribulokinase activity"/>
    <property type="evidence" value="ECO:0007669"/>
    <property type="project" value="RHEA"/>
</dbReference>
<dbReference type="GO" id="GO:0008741">
    <property type="term" value="F:ribulokinase activity"/>
    <property type="evidence" value="ECO:0007669"/>
    <property type="project" value="UniProtKB-UniRule"/>
</dbReference>
<dbReference type="GO" id="GO:0019569">
    <property type="term" value="P:L-arabinose catabolic process to xylulose 5-phosphate"/>
    <property type="evidence" value="ECO:0007669"/>
    <property type="project" value="UniProtKB-UniRule"/>
</dbReference>
<dbReference type="CDD" id="cd07781">
    <property type="entry name" value="ASKHA_NBD_FGGY_L-RBK"/>
    <property type="match status" value="1"/>
</dbReference>
<dbReference type="Gene3D" id="1.20.58.2240">
    <property type="match status" value="1"/>
</dbReference>
<dbReference type="Gene3D" id="3.30.420.40">
    <property type="match status" value="1"/>
</dbReference>
<dbReference type="HAMAP" id="MF_00520">
    <property type="entry name" value="Ribulokinase"/>
    <property type="match status" value="1"/>
</dbReference>
<dbReference type="InterPro" id="IPR043129">
    <property type="entry name" value="ATPase_NBD"/>
</dbReference>
<dbReference type="InterPro" id="IPR018485">
    <property type="entry name" value="FGGY_C"/>
</dbReference>
<dbReference type="InterPro" id="IPR005929">
    <property type="entry name" value="Ribulokinase"/>
</dbReference>
<dbReference type="NCBIfam" id="TIGR01234">
    <property type="entry name" value="L-ribulokinase"/>
    <property type="match status" value="1"/>
</dbReference>
<dbReference type="NCBIfam" id="NF003154">
    <property type="entry name" value="PRK04123.1"/>
    <property type="match status" value="1"/>
</dbReference>
<dbReference type="PANTHER" id="PTHR43435:SF4">
    <property type="entry name" value="FGGY CARBOHYDRATE KINASE DOMAIN-CONTAINING PROTEIN"/>
    <property type="match status" value="1"/>
</dbReference>
<dbReference type="PANTHER" id="PTHR43435">
    <property type="entry name" value="RIBULOKINASE"/>
    <property type="match status" value="1"/>
</dbReference>
<dbReference type="Pfam" id="PF02782">
    <property type="entry name" value="FGGY_C"/>
    <property type="match status" value="1"/>
</dbReference>
<dbReference type="SUPFAM" id="SSF53067">
    <property type="entry name" value="Actin-like ATPase domain"/>
    <property type="match status" value="2"/>
</dbReference>